<feature type="signal peptide" evidence="2">
    <location>
        <begin position="1"/>
        <end position="20"/>
    </location>
</feature>
<feature type="propeptide" id="PRO_0000036350" evidence="2">
    <location>
        <begin position="21"/>
        <end position="104"/>
    </location>
</feature>
<feature type="propeptide" id="PRO_0000036351" evidence="2">
    <location>
        <begin position="107"/>
        <end position="109"/>
    </location>
</feature>
<feature type="peptide" id="PRO_0000036352" description="Urotensin-2">
    <location>
        <begin position="110"/>
        <end position="123"/>
    </location>
</feature>
<feature type="region of interest" description="Disordered" evidence="3">
    <location>
        <begin position="57"/>
        <end position="88"/>
    </location>
</feature>
<feature type="disulfide bond" evidence="1">
    <location>
        <begin position="117"/>
        <end position="122"/>
    </location>
</feature>
<gene>
    <name type="primary">Uts2</name>
    <name type="synonym">Ucn2</name>
</gene>
<organism>
    <name type="scientific">Mus musculus</name>
    <name type="common">Mouse</name>
    <dbReference type="NCBI Taxonomy" id="10090"/>
    <lineage>
        <taxon>Eukaryota</taxon>
        <taxon>Metazoa</taxon>
        <taxon>Chordata</taxon>
        <taxon>Craniata</taxon>
        <taxon>Vertebrata</taxon>
        <taxon>Euteleostomi</taxon>
        <taxon>Mammalia</taxon>
        <taxon>Eutheria</taxon>
        <taxon>Euarchontoglires</taxon>
        <taxon>Glires</taxon>
        <taxon>Rodentia</taxon>
        <taxon>Myomorpha</taxon>
        <taxon>Muroidea</taxon>
        <taxon>Muridae</taxon>
        <taxon>Murinae</taxon>
        <taxon>Mus</taxon>
        <taxon>Mus</taxon>
    </lineage>
</organism>
<protein>
    <recommendedName>
        <fullName>Urotensin-2</fullName>
    </recommendedName>
    <alternativeName>
        <fullName>Urotensin II</fullName>
        <shortName>U-II</shortName>
        <shortName>UII</shortName>
    </alternativeName>
</protein>
<keyword id="KW-0165">Cleavage on pair of basic residues</keyword>
<keyword id="KW-1015">Disulfide bond</keyword>
<keyword id="KW-0372">Hormone</keyword>
<keyword id="KW-1185">Reference proteome</keyword>
<keyword id="KW-0964">Secreted</keyword>
<keyword id="KW-0732">Signal</keyword>
<accession>Q9QZQ3</accession>
<evidence type="ECO:0000250" key="1"/>
<evidence type="ECO:0000255" key="2"/>
<evidence type="ECO:0000256" key="3">
    <source>
        <dbReference type="SAM" id="MobiDB-lite"/>
    </source>
</evidence>
<evidence type="ECO:0000305" key="4"/>
<comment type="function">
    <text evidence="1">Highly potent vasoconstrictor.</text>
</comment>
<comment type="subcellular location">
    <subcellularLocation>
        <location>Secreted</location>
    </subcellularLocation>
</comment>
<comment type="tissue specificity">
    <text>Brain specific. Predominantly expressed in motoneurons of the brainstem and spinal cord.</text>
</comment>
<comment type="similarity">
    <text evidence="4">Belongs to the urotensin-2 family.</text>
</comment>
<reference key="1">
    <citation type="journal article" date="1999" name="FEBS Lett.">
        <title>Cloning, sequence analysis and tissue distribution of the mouse and rat urotensin II precursors.</title>
        <authorList>
            <person name="Coulouarn Y."/>
            <person name="Jegou S."/>
            <person name="Tostivint H."/>
            <person name="Vaudry H."/>
            <person name="Lihrmann I."/>
        </authorList>
    </citation>
    <scope>NUCLEOTIDE SEQUENCE [MRNA]</scope>
    <source>
        <tissue>Spinal cord</tissue>
    </source>
</reference>
<proteinExistence type="evidence at transcript level"/>
<dbReference type="EMBL" id="AF172175">
    <property type="protein sequence ID" value="AAD55767.1"/>
    <property type="molecule type" value="mRNA"/>
</dbReference>
<dbReference type="CCDS" id="CCDS18977.1"/>
<dbReference type="RefSeq" id="NP_036040.1">
    <property type="nucleotide sequence ID" value="NM_011910.3"/>
</dbReference>
<dbReference type="FunCoup" id="Q9QZQ3">
    <property type="interactions" value="815"/>
</dbReference>
<dbReference type="STRING" id="10090.ENSMUSP00000030803"/>
<dbReference type="BindingDB" id="Q9QZQ3"/>
<dbReference type="GlyGen" id="Q9QZQ3">
    <property type="glycosylation" value="1 site"/>
</dbReference>
<dbReference type="PaxDb" id="10090-ENSMUSP00000030803"/>
<dbReference type="Antibodypedia" id="1351">
    <property type="antibodies" value="253 antibodies from 26 providers"/>
</dbReference>
<dbReference type="DNASU" id="24111"/>
<dbReference type="Ensembl" id="ENSMUST00000030803.2">
    <property type="protein sequence ID" value="ENSMUSP00000030803.2"/>
    <property type="gene ID" value="ENSMUSG00000028963.2"/>
</dbReference>
<dbReference type="GeneID" id="24111"/>
<dbReference type="KEGG" id="mmu:24111"/>
<dbReference type="UCSC" id="uc008vyd.1">
    <property type="organism name" value="mouse"/>
</dbReference>
<dbReference type="AGR" id="MGI:1346329"/>
<dbReference type="CTD" id="10911"/>
<dbReference type="MGI" id="MGI:1346329">
    <property type="gene designation" value="Uts2"/>
</dbReference>
<dbReference type="VEuPathDB" id="HostDB:ENSMUSG00000028963"/>
<dbReference type="eggNOG" id="ENOG502SCRX">
    <property type="taxonomic scope" value="Eukaryota"/>
</dbReference>
<dbReference type="GeneTree" id="ENSGT00510000049583"/>
<dbReference type="HOGENOM" id="CLU_156959_0_0_1"/>
<dbReference type="InParanoid" id="Q9QZQ3"/>
<dbReference type="OMA" id="ETFYGNH"/>
<dbReference type="OrthoDB" id="8894951at2759"/>
<dbReference type="PhylomeDB" id="Q9QZQ3"/>
<dbReference type="TreeFam" id="TF330799"/>
<dbReference type="Reactome" id="R-MMU-375276">
    <property type="pathway name" value="Peptide ligand-binding receptors"/>
</dbReference>
<dbReference type="Reactome" id="R-MMU-416476">
    <property type="pathway name" value="G alpha (q) signalling events"/>
</dbReference>
<dbReference type="BioGRID-ORCS" id="24111">
    <property type="hits" value="3 hits in 77 CRISPR screens"/>
</dbReference>
<dbReference type="PRO" id="PR:Q9QZQ3"/>
<dbReference type="Proteomes" id="UP000000589">
    <property type="component" value="Chromosome 4"/>
</dbReference>
<dbReference type="RNAct" id="Q9QZQ3">
    <property type="molecule type" value="protein"/>
</dbReference>
<dbReference type="Bgee" id="ENSMUSG00000028963">
    <property type="expression patterns" value="Expressed in lumbar subsegment of spinal cord and 20 other cell types or tissues"/>
</dbReference>
<dbReference type="ExpressionAtlas" id="Q9QZQ3">
    <property type="expression patterns" value="baseline and differential"/>
</dbReference>
<dbReference type="GO" id="GO:0005615">
    <property type="term" value="C:extracellular space"/>
    <property type="evidence" value="ECO:0007669"/>
    <property type="project" value="Ensembl"/>
</dbReference>
<dbReference type="GO" id="GO:0005179">
    <property type="term" value="F:hormone activity"/>
    <property type="evidence" value="ECO:0007669"/>
    <property type="project" value="UniProtKB-KW"/>
</dbReference>
<dbReference type="GO" id="GO:0097746">
    <property type="term" value="P:blood vessel diameter maintenance"/>
    <property type="evidence" value="ECO:0007669"/>
    <property type="project" value="Ensembl"/>
</dbReference>
<dbReference type="GO" id="GO:0045776">
    <property type="term" value="P:negative regulation of blood pressure"/>
    <property type="evidence" value="ECO:0007669"/>
    <property type="project" value="Ensembl"/>
</dbReference>
<dbReference type="GO" id="GO:0003105">
    <property type="term" value="P:negative regulation of glomerular filtration"/>
    <property type="evidence" value="ECO:0007669"/>
    <property type="project" value="Ensembl"/>
</dbReference>
<dbReference type="GO" id="GO:0010459">
    <property type="term" value="P:negative regulation of heart rate"/>
    <property type="evidence" value="ECO:0007669"/>
    <property type="project" value="Ensembl"/>
</dbReference>
<dbReference type="GO" id="GO:0046676">
    <property type="term" value="P:negative regulation of insulin secretion"/>
    <property type="evidence" value="ECO:0007669"/>
    <property type="project" value="Ensembl"/>
</dbReference>
<dbReference type="GO" id="GO:0035811">
    <property type="term" value="P:negative regulation of urine volume"/>
    <property type="evidence" value="ECO:0007669"/>
    <property type="project" value="Ensembl"/>
</dbReference>
<dbReference type="GO" id="GO:0045766">
    <property type="term" value="P:positive regulation of angiogenesis"/>
    <property type="evidence" value="ECO:0007669"/>
    <property type="project" value="Ensembl"/>
</dbReference>
<dbReference type="GO" id="GO:0045777">
    <property type="term" value="P:positive regulation of blood pressure"/>
    <property type="evidence" value="ECO:0007669"/>
    <property type="project" value="Ensembl"/>
</dbReference>
<dbReference type="GO" id="GO:0045597">
    <property type="term" value="P:positive regulation of cell differentiation"/>
    <property type="evidence" value="ECO:0007669"/>
    <property type="project" value="Ensembl"/>
</dbReference>
<dbReference type="GO" id="GO:0046005">
    <property type="term" value="P:positive regulation of circadian sleep/wake cycle, REM sleep"/>
    <property type="evidence" value="ECO:0007669"/>
    <property type="project" value="Ensembl"/>
</dbReference>
<dbReference type="GO" id="GO:0010841">
    <property type="term" value="P:positive regulation of circadian sleep/wake cycle, wakefulness"/>
    <property type="evidence" value="ECO:0007669"/>
    <property type="project" value="Ensembl"/>
</dbReference>
<dbReference type="GO" id="GO:0032967">
    <property type="term" value="P:positive regulation of collagen biosynthetic process"/>
    <property type="evidence" value="ECO:0007669"/>
    <property type="project" value="Ensembl"/>
</dbReference>
<dbReference type="GO" id="GO:0007204">
    <property type="term" value="P:positive regulation of cytosolic calcium ion concentration"/>
    <property type="evidence" value="ECO:0007669"/>
    <property type="project" value="Ensembl"/>
</dbReference>
<dbReference type="GO" id="GO:0010763">
    <property type="term" value="P:positive regulation of fibroblast migration"/>
    <property type="evidence" value="ECO:0007669"/>
    <property type="project" value="Ensembl"/>
</dbReference>
<dbReference type="GO" id="GO:0048146">
    <property type="term" value="P:positive regulation of fibroblast proliferation"/>
    <property type="evidence" value="ECO:0007669"/>
    <property type="project" value="Ensembl"/>
</dbReference>
<dbReference type="GO" id="GO:0010460">
    <property type="term" value="P:positive regulation of heart rate"/>
    <property type="evidence" value="ECO:0007669"/>
    <property type="project" value="Ensembl"/>
</dbReference>
<dbReference type="GO" id="GO:0032224">
    <property type="term" value="P:positive regulation of synaptic transmission, cholinergic"/>
    <property type="evidence" value="ECO:0007669"/>
    <property type="project" value="Ensembl"/>
</dbReference>
<dbReference type="GO" id="GO:0001666">
    <property type="term" value="P:response to hypoxia"/>
    <property type="evidence" value="ECO:0007669"/>
    <property type="project" value="Ensembl"/>
</dbReference>
<dbReference type="GO" id="GO:0033574">
    <property type="term" value="P:response to testosterone"/>
    <property type="evidence" value="ECO:0007669"/>
    <property type="project" value="Ensembl"/>
</dbReference>
<dbReference type="GO" id="GO:0009410">
    <property type="term" value="P:response to xenobiotic stimulus"/>
    <property type="evidence" value="ECO:0007669"/>
    <property type="project" value="Ensembl"/>
</dbReference>
<dbReference type="InterPro" id="IPR001483">
    <property type="entry name" value="Urotensin_II"/>
</dbReference>
<dbReference type="PANTHER" id="PTHR14447">
    <property type="entry name" value="UROTENSIN 2"/>
    <property type="match status" value="1"/>
</dbReference>
<dbReference type="PANTHER" id="PTHR14447:SF0">
    <property type="entry name" value="UROTENSIN-2"/>
    <property type="match status" value="1"/>
</dbReference>
<dbReference type="Pfam" id="PF02083">
    <property type="entry name" value="Urotensin_II"/>
    <property type="match status" value="1"/>
</dbReference>
<dbReference type="PROSITE" id="PS00984">
    <property type="entry name" value="UROTENSIN_II"/>
    <property type="match status" value="1"/>
</dbReference>
<sequence length="123" mass="13625">MDRVPFCCLLFIGLLNPLLSLPVTDTGERTLQLPVLEEDALRALEELERMALLQTLRQTMGTEAGESPGEAGPSTETPTPRGSMRKAFAGQNSNTVLSRLLARTRKQHKQHGAAPECFWKYCI</sequence>
<name>UTS2_MOUSE</name>